<dbReference type="EC" id="2.7.7.8" evidence="1"/>
<dbReference type="EMBL" id="BA000035">
    <property type="protein sequence ID" value="BAC18678.1"/>
    <property type="status" value="ALT_INIT"/>
    <property type="molecule type" value="Genomic_DNA"/>
</dbReference>
<dbReference type="RefSeq" id="WP_035108841.1">
    <property type="nucleotide sequence ID" value="NC_004369.1"/>
</dbReference>
<dbReference type="SMR" id="Q8FPB7"/>
<dbReference type="STRING" id="196164.gene:10742296"/>
<dbReference type="KEGG" id="cef:CE1868"/>
<dbReference type="eggNOG" id="COG1185">
    <property type="taxonomic scope" value="Bacteria"/>
</dbReference>
<dbReference type="HOGENOM" id="CLU_004217_2_2_11"/>
<dbReference type="OrthoDB" id="9804305at2"/>
<dbReference type="Proteomes" id="UP000001409">
    <property type="component" value="Chromosome"/>
</dbReference>
<dbReference type="GO" id="GO:0005829">
    <property type="term" value="C:cytosol"/>
    <property type="evidence" value="ECO:0007669"/>
    <property type="project" value="TreeGrafter"/>
</dbReference>
<dbReference type="GO" id="GO:0000175">
    <property type="term" value="F:3'-5'-RNA exonuclease activity"/>
    <property type="evidence" value="ECO:0007669"/>
    <property type="project" value="TreeGrafter"/>
</dbReference>
<dbReference type="GO" id="GO:0000287">
    <property type="term" value="F:magnesium ion binding"/>
    <property type="evidence" value="ECO:0007669"/>
    <property type="project" value="UniProtKB-UniRule"/>
</dbReference>
<dbReference type="GO" id="GO:0004654">
    <property type="term" value="F:polyribonucleotide nucleotidyltransferase activity"/>
    <property type="evidence" value="ECO:0007669"/>
    <property type="project" value="UniProtKB-UniRule"/>
</dbReference>
<dbReference type="GO" id="GO:0003723">
    <property type="term" value="F:RNA binding"/>
    <property type="evidence" value="ECO:0007669"/>
    <property type="project" value="UniProtKB-UniRule"/>
</dbReference>
<dbReference type="GO" id="GO:0006402">
    <property type="term" value="P:mRNA catabolic process"/>
    <property type="evidence" value="ECO:0007669"/>
    <property type="project" value="UniProtKB-UniRule"/>
</dbReference>
<dbReference type="GO" id="GO:0006396">
    <property type="term" value="P:RNA processing"/>
    <property type="evidence" value="ECO:0007669"/>
    <property type="project" value="InterPro"/>
</dbReference>
<dbReference type="CDD" id="cd02393">
    <property type="entry name" value="KH-I_PNPase"/>
    <property type="match status" value="1"/>
</dbReference>
<dbReference type="CDD" id="cd11364">
    <property type="entry name" value="RNase_PH_PNPase_2"/>
    <property type="match status" value="1"/>
</dbReference>
<dbReference type="CDD" id="cd04472">
    <property type="entry name" value="S1_PNPase"/>
    <property type="match status" value="1"/>
</dbReference>
<dbReference type="FunFam" id="2.40.50.140:FF:000069">
    <property type="entry name" value="Polyribonucleotide nucleotidyltransferase"/>
    <property type="match status" value="1"/>
</dbReference>
<dbReference type="FunFam" id="3.30.1370.10:FF:000001">
    <property type="entry name" value="Polyribonucleotide nucleotidyltransferase"/>
    <property type="match status" value="1"/>
</dbReference>
<dbReference type="FunFam" id="3.30.230.70:FF:000001">
    <property type="entry name" value="Polyribonucleotide nucleotidyltransferase"/>
    <property type="match status" value="1"/>
</dbReference>
<dbReference type="FunFam" id="3.30.230.70:FF:000002">
    <property type="entry name" value="Polyribonucleotide nucleotidyltransferase"/>
    <property type="match status" value="1"/>
</dbReference>
<dbReference type="Gene3D" id="3.30.230.70">
    <property type="entry name" value="GHMP Kinase, N-terminal domain"/>
    <property type="match status" value="2"/>
</dbReference>
<dbReference type="Gene3D" id="3.30.1370.10">
    <property type="entry name" value="K Homology domain, type 1"/>
    <property type="match status" value="1"/>
</dbReference>
<dbReference type="Gene3D" id="2.40.50.140">
    <property type="entry name" value="Nucleic acid-binding proteins"/>
    <property type="match status" value="1"/>
</dbReference>
<dbReference type="HAMAP" id="MF_01595">
    <property type="entry name" value="PNPase"/>
    <property type="match status" value="1"/>
</dbReference>
<dbReference type="InterPro" id="IPR001247">
    <property type="entry name" value="ExoRNase_PH_dom1"/>
</dbReference>
<dbReference type="InterPro" id="IPR036345">
    <property type="entry name" value="ExoRNase_PH_dom2_sf"/>
</dbReference>
<dbReference type="InterPro" id="IPR014069">
    <property type="entry name" value="GPSI/PNP"/>
</dbReference>
<dbReference type="InterPro" id="IPR004087">
    <property type="entry name" value="KH_dom"/>
</dbReference>
<dbReference type="InterPro" id="IPR004088">
    <property type="entry name" value="KH_dom_type_1"/>
</dbReference>
<dbReference type="InterPro" id="IPR036612">
    <property type="entry name" value="KH_dom_type_1_sf"/>
</dbReference>
<dbReference type="InterPro" id="IPR012340">
    <property type="entry name" value="NA-bd_OB-fold"/>
</dbReference>
<dbReference type="InterPro" id="IPR012162">
    <property type="entry name" value="PNPase"/>
</dbReference>
<dbReference type="InterPro" id="IPR027408">
    <property type="entry name" value="PNPase/RNase_PH_dom_sf"/>
</dbReference>
<dbReference type="InterPro" id="IPR015848">
    <property type="entry name" value="PNPase_PH_RNA-bd_bac/org-type"/>
</dbReference>
<dbReference type="InterPro" id="IPR036456">
    <property type="entry name" value="PNPase_PH_RNA-bd_sf"/>
</dbReference>
<dbReference type="InterPro" id="IPR020568">
    <property type="entry name" value="Ribosomal_Su5_D2-typ_SF"/>
</dbReference>
<dbReference type="InterPro" id="IPR003029">
    <property type="entry name" value="S1_domain"/>
</dbReference>
<dbReference type="NCBIfam" id="TIGR03591">
    <property type="entry name" value="polynuc_phos"/>
    <property type="match status" value="1"/>
</dbReference>
<dbReference type="NCBIfam" id="TIGR02696">
    <property type="entry name" value="pppGpp_PNP"/>
    <property type="match status" value="1"/>
</dbReference>
<dbReference type="NCBIfam" id="NF008805">
    <property type="entry name" value="PRK11824.1"/>
    <property type="match status" value="1"/>
</dbReference>
<dbReference type="PANTHER" id="PTHR11252">
    <property type="entry name" value="POLYRIBONUCLEOTIDE NUCLEOTIDYLTRANSFERASE"/>
    <property type="match status" value="1"/>
</dbReference>
<dbReference type="PANTHER" id="PTHR11252:SF0">
    <property type="entry name" value="POLYRIBONUCLEOTIDE NUCLEOTIDYLTRANSFERASE 1, MITOCHONDRIAL"/>
    <property type="match status" value="1"/>
</dbReference>
<dbReference type="Pfam" id="PF00013">
    <property type="entry name" value="KH_1"/>
    <property type="match status" value="1"/>
</dbReference>
<dbReference type="Pfam" id="PF03726">
    <property type="entry name" value="PNPase"/>
    <property type="match status" value="1"/>
</dbReference>
<dbReference type="Pfam" id="PF01138">
    <property type="entry name" value="RNase_PH"/>
    <property type="match status" value="2"/>
</dbReference>
<dbReference type="Pfam" id="PF00575">
    <property type="entry name" value="S1"/>
    <property type="match status" value="1"/>
</dbReference>
<dbReference type="PIRSF" id="PIRSF005499">
    <property type="entry name" value="PNPase"/>
    <property type="match status" value="1"/>
</dbReference>
<dbReference type="SMART" id="SM00322">
    <property type="entry name" value="KH"/>
    <property type="match status" value="1"/>
</dbReference>
<dbReference type="SMART" id="SM00316">
    <property type="entry name" value="S1"/>
    <property type="match status" value="1"/>
</dbReference>
<dbReference type="SUPFAM" id="SSF54791">
    <property type="entry name" value="Eukaryotic type KH-domain (KH-domain type I)"/>
    <property type="match status" value="1"/>
</dbReference>
<dbReference type="SUPFAM" id="SSF50249">
    <property type="entry name" value="Nucleic acid-binding proteins"/>
    <property type="match status" value="1"/>
</dbReference>
<dbReference type="SUPFAM" id="SSF46915">
    <property type="entry name" value="Polynucleotide phosphorylase/guanosine pentaphosphate synthase (PNPase/GPSI), domain 3"/>
    <property type="match status" value="1"/>
</dbReference>
<dbReference type="SUPFAM" id="SSF55666">
    <property type="entry name" value="Ribonuclease PH domain 2-like"/>
    <property type="match status" value="2"/>
</dbReference>
<dbReference type="SUPFAM" id="SSF54211">
    <property type="entry name" value="Ribosomal protein S5 domain 2-like"/>
    <property type="match status" value="2"/>
</dbReference>
<dbReference type="PROSITE" id="PS50084">
    <property type="entry name" value="KH_TYPE_1"/>
    <property type="match status" value="1"/>
</dbReference>
<dbReference type="PROSITE" id="PS50126">
    <property type="entry name" value="S1"/>
    <property type="match status" value="1"/>
</dbReference>
<name>PNP_COREF</name>
<sequence>MSEVKYFEDTDYGVIEAIATIDNGDFGTRTIRFETGQLARQADGAVTTYLDDETMLLATTTASNQPREGLDFFPLTVDVEERMYAAGRIPGSFFRREGRPSTEAILACRLIDRPLRPTFVKGLRNEVQVIITVMSVSPEDSYDVVAINGASAATRISGLPVSGAVGGVRMALIADENHPEGQWVAFPTAEQQKASVFELVVAGRLVERKRGNKTFSDVAVMMVEAGASENVVERIKEGAPAPTEKTVAEGLEAAKPFIDLLCRAQEGLAQRVAKETREFPLFPAYSDEVYAAVEKQASKKLTQLMTIKGKNERENATNDFMVEVEEKLIGRFEDDLGAAVASKEIRAAYNSLMKKIVRGKILSEGFRIDGRGVSDIRDLGVEVELIPRAHGSSLFERGETQILGVTTLDMLKMEQHIDSLAPVDTKRYMHHYNFPPYSTGETGRVGSPKRREIGHGALAERAVLPVIPSREDFPYAIRQVSEALGSNGSTSMGSVCASTLSLYNAGVPLKAPVAGIAMGLVSDEVDGKTEYVALTDILGAEDAFGDMDFKVAGTAEFITALQLDTKLDGIPSKVLADALEQARDARLAILETMAEVIDGPDEMSQFAPRITTIQIPVSKIGELIGPKGKNINALTEETGANISIEDDGTVFISAASGEAAEAAIEKINALANPQLPKVGERFLGTVVKATAFGAFVSLLPGRDGLVHISKLGNGKRVEKVEDVVTVGEKLQVEIADIDNRGKISLVPVVEED</sequence>
<keyword id="KW-0963">Cytoplasm</keyword>
<keyword id="KW-0460">Magnesium</keyword>
<keyword id="KW-0479">Metal-binding</keyword>
<keyword id="KW-0548">Nucleotidyltransferase</keyword>
<keyword id="KW-1185">Reference proteome</keyword>
<keyword id="KW-0694">RNA-binding</keyword>
<keyword id="KW-0808">Transferase</keyword>
<feature type="chain" id="PRO_0000329608" description="Polyribonucleotide nucleotidyltransferase">
    <location>
        <begin position="1"/>
        <end position="752"/>
    </location>
</feature>
<feature type="domain" description="KH" evidence="1">
    <location>
        <begin position="608"/>
        <end position="667"/>
    </location>
</feature>
<feature type="domain" description="S1 motif" evidence="1">
    <location>
        <begin position="679"/>
        <end position="748"/>
    </location>
</feature>
<feature type="binding site" evidence="1">
    <location>
        <position position="542"/>
    </location>
    <ligand>
        <name>Mg(2+)</name>
        <dbReference type="ChEBI" id="CHEBI:18420"/>
    </ligand>
</feature>
<feature type="binding site" evidence="1">
    <location>
        <position position="548"/>
    </location>
    <ligand>
        <name>Mg(2+)</name>
        <dbReference type="ChEBI" id="CHEBI:18420"/>
    </ligand>
</feature>
<organism>
    <name type="scientific">Corynebacterium efficiens (strain DSM 44549 / YS-314 / AJ 12310 / JCM 11189 / NBRC 100395)</name>
    <dbReference type="NCBI Taxonomy" id="196164"/>
    <lineage>
        <taxon>Bacteria</taxon>
        <taxon>Bacillati</taxon>
        <taxon>Actinomycetota</taxon>
        <taxon>Actinomycetes</taxon>
        <taxon>Mycobacteriales</taxon>
        <taxon>Corynebacteriaceae</taxon>
        <taxon>Corynebacterium</taxon>
    </lineage>
</organism>
<reference key="1">
    <citation type="journal article" date="2003" name="Genome Res.">
        <title>Comparative complete genome sequence analysis of the amino acid replacements responsible for the thermostability of Corynebacterium efficiens.</title>
        <authorList>
            <person name="Nishio Y."/>
            <person name="Nakamura Y."/>
            <person name="Kawarabayasi Y."/>
            <person name="Usuda Y."/>
            <person name="Kimura E."/>
            <person name="Sugimoto S."/>
            <person name="Matsui K."/>
            <person name="Yamagishi A."/>
            <person name="Kikuchi H."/>
            <person name="Ikeo K."/>
            <person name="Gojobori T."/>
        </authorList>
    </citation>
    <scope>NUCLEOTIDE SEQUENCE [LARGE SCALE GENOMIC DNA]</scope>
    <source>
        <strain>DSM 44549 / YS-314 / AJ 12310 / JCM 11189 / NBRC 100395</strain>
    </source>
</reference>
<accession>Q8FPB7</accession>
<protein>
    <recommendedName>
        <fullName evidence="1">Polyribonucleotide nucleotidyltransferase</fullName>
        <ecNumber evidence="1">2.7.7.8</ecNumber>
    </recommendedName>
    <alternativeName>
        <fullName evidence="1">Polynucleotide phosphorylase</fullName>
        <shortName evidence="1">PNPase</shortName>
    </alternativeName>
</protein>
<comment type="function">
    <text evidence="1">Involved in mRNA degradation. Catalyzes the phosphorolysis of single-stranded polyribonucleotides processively in the 3'- to 5'-direction.</text>
</comment>
<comment type="catalytic activity">
    <reaction evidence="1">
        <text>RNA(n+1) + phosphate = RNA(n) + a ribonucleoside 5'-diphosphate</text>
        <dbReference type="Rhea" id="RHEA:22096"/>
        <dbReference type="Rhea" id="RHEA-COMP:14527"/>
        <dbReference type="Rhea" id="RHEA-COMP:17342"/>
        <dbReference type="ChEBI" id="CHEBI:43474"/>
        <dbReference type="ChEBI" id="CHEBI:57930"/>
        <dbReference type="ChEBI" id="CHEBI:140395"/>
        <dbReference type="EC" id="2.7.7.8"/>
    </reaction>
</comment>
<comment type="cofactor">
    <cofactor evidence="1">
        <name>Mg(2+)</name>
        <dbReference type="ChEBI" id="CHEBI:18420"/>
    </cofactor>
</comment>
<comment type="subcellular location">
    <subcellularLocation>
        <location evidence="1">Cytoplasm</location>
    </subcellularLocation>
</comment>
<comment type="similarity">
    <text evidence="1">Belongs to the polyribonucleotide nucleotidyltransferase family.</text>
</comment>
<comment type="sequence caution" evidence="2">
    <conflict type="erroneous initiation">
        <sequence resource="EMBL-CDS" id="BAC18678"/>
    </conflict>
</comment>
<gene>
    <name evidence="1" type="primary">pnp</name>
    <name type="ordered locus">CE1868</name>
</gene>
<evidence type="ECO:0000255" key="1">
    <source>
        <dbReference type="HAMAP-Rule" id="MF_01595"/>
    </source>
</evidence>
<evidence type="ECO:0000305" key="2"/>
<proteinExistence type="inferred from homology"/>